<protein>
    <recommendedName>
        <fullName>Capsular polysaccharide phosphotransferase SacB</fullName>
        <ecNumber>2.7.-.-</ecNumber>
    </recommendedName>
    <alternativeName>
        <fullName>Stealth protein SacB</fullName>
    </alternativeName>
</protein>
<gene>
    <name type="primary">sacB</name>
</gene>
<accession>Q84D00</accession>
<name>SACB5_NEIMD</name>
<evidence type="ECO:0000250" key="1"/>
<evidence type="ECO:0000305" key="2"/>
<reference key="1">
    <citation type="journal article" date="2004" name="J. Clin. Microbiol.">
        <title>Use of real-time PCR to resolve slide agglutination discrepancies in serogroup identification of Neisseria meningitidis.</title>
        <authorList>
            <person name="Mothershed E.A."/>
            <person name="Sacchi C.T."/>
            <person name="Whitney A.M."/>
            <person name="Barnett G.A."/>
            <person name="Ajello G.W."/>
            <person name="Schmink S."/>
            <person name="Mayer L.W."/>
            <person name="Phelan M."/>
            <person name="Taylor T.H. Jr."/>
            <person name="Bernhardt S.A."/>
            <person name="Rosenstein N.E."/>
            <person name="Popovic T."/>
        </authorList>
    </citation>
    <scope>NUCLEOTIDE SEQUENCE [GENOMIC DNA]</scope>
    <source>
        <strain>M4775 / Serogroup A</strain>
    </source>
</reference>
<reference key="2">
    <citation type="journal article" date="2005" name="PLoS Comput. Biol.">
        <title>Stealth proteins: in silico identification of a novel protein family rendering bacterial pathogens invisible to host immune defense.</title>
        <authorList>
            <person name="Sperisen P."/>
            <person name="Schmid C.D."/>
            <person name="Bucher P."/>
            <person name="Zilian O."/>
        </authorList>
    </citation>
    <scope>IDENTIFICATION AS A STEALTH PROTEIN</scope>
    <scope>PREDICTION OF FUNCTION</scope>
</reference>
<feature type="chain" id="PRO_0000235954" description="Capsular polysaccharide phosphotransferase SacB">
    <location>
        <begin position="1"/>
        <end position="545"/>
    </location>
</feature>
<proteinExistence type="inferred from homology"/>
<comment type="function">
    <text evidence="1">May be the polymerase that links individual UDP-N-acetyl-D-mannosamine monomers. In serotype A the capsule is composed of repeated units of (alpha 1-6)-linked N-acetyl-D-mannosamine-1-phosphate (By similarity).</text>
</comment>
<comment type="miscellaneous">
    <text>Stealth proteins are part of a protein family that is conserved from bacteria to higher eukaryotes. Family members were first identified in microbes as proteins that help pathogens to elude the host innate immune system. Microbial stealth proteins are involved in the biosynthesis of exopolysaccharides. Stealth proteins are predicted to function as hexose-1-phosphoryltransferases.</text>
</comment>
<comment type="similarity">
    <text evidence="2">Belongs to the stealth family.</text>
</comment>
<dbReference type="EC" id="2.7.-.-"/>
<dbReference type="EMBL" id="AY234202">
    <property type="protein sequence ID" value="AAO85300.1"/>
    <property type="molecule type" value="Genomic_DNA"/>
</dbReference>
<dbReference type="SMR" id="Q84D00"/>
<dbReference type="GO" id="GO:0016772">
    <property type="term" value="F:transferase activity, transferring phosphorus-containing groups"/>
    <property type="evidence" value="ECO:0007669"/>
    <property type="project" value="InterPro"/>
</dbReference>
<dbReference type="GO" id="GO:0000271">
    <property type="term" value="P:polysaccharide biosynthetic process"/>
    <property type="evidence" value="ECO:0007669"/>
    <property type="project" value="UniProtKB-KW"/>
</dbReference>
<dbReference type="InterPro" id="IPR047141">
    <property type="entry name" value="Stealth"/>
</dbReference>
<dbReference type="InterPro" id="IPR031358">
    <property type="entry name" value="Stealth_CR1"/>
</dbReference>
<dbReference type="InterPro" id="IPR021520">
    <property type="entry name" value="Stealth_CR2"/>
</dbReference>
<dbReference type="InterPro" id="IPR031357">
    <property type="entry name" value="Stealth_CR3"/>
</dbReference>
<dbReference type="InterPro" id="IPR031356">
    <property type="entry name" value="Stealth_CR4"/>
</dbReference>
<dbReference type="PANTHER" id="PTHR24045">
    <property type="match status" value="1"/>
</dbReference>
<dbReference type="PANTHER" id="PTHR24045:SF0">
    <property type="entry name" value="N-ACETYLGLUCOSAMINE-1-PHOSPHOTRANSFERASE SUBUNITS ALPHA_BETA"/>
    <property type="match status" value="1"/>
</dbReference>
<dbReference type="Pfam" id="PF17101">
    <property type="entry name" value="Stealth_CR1"/>
    <property type="match status" value="1"/>
</dbReference>
<dbReference type="Pfam" id="PF11380">
    <property type="entry name" value="Stealth_CR2"/>
    <property type="match status" value="1"/>
</dbReference>
<dbReference type="Pfam" id="PF17102">
    <property type="entry name" value="Stealth_CR3"/>
    <property type="match status" value="1"/>
</dbReference>
<dbReference type="Pfam" id="PF17103">
    <property type="entry name" value="Stealth_CR4"/>
    <property type="match status" value="1"/>
</dbReference>
<organism>
    <name type="scientific">Neisseria meningitidis serogroup A</name>
    <dbReference type="NCBI Taxonomy" id="65699"/>
    <lineage>
        <taxon>Bacteria</taxon>
        <taxon>Pseudomonadati</taxon>
        <taxon>Pseudomonadota</taxon>
        <taxon>Betaproteobacteria</taxon>
        <taxon>Neisseriales</taxon>
        <taxon>Neisseriaceae</taxon>
        <taxon>Neisseria</taxon>
    </lineage>
</organism>
<sequence>MFILNNRKWRKLKRDPSAFFRDSKFNFLRYFSAKKFAKNFKNSSHIHKTNISKAQSNISSTLKQNRKQDMLIPINFFNFEYIVKELNNQNAIGVYILPSNLTLKPALCILESHKEDFLNKFLLTISSENLKLQYKFNGQIKNPKSVNEIWTDLFSIAHVDMKLSTDRTLSSSISQFWFRLEFCKEDKDFILFPTANRYSRKLWKHSIKNNQLFKEGIRNYSEISSLPYEEDHNFDIDLVFTWVNSEDKNWQELYKKYKPDFNSDATSTSRFLSRDELKFALRSWEMNGSFIRKIFIVSNCAPPAWLDLNNPKIQWVYHEEIMPQSALPTFSSHAIETSLHHIPGISNYFIYSNDDFLLTKPLNKDNFFYSNGIAKLRLEAWGNVNGECTEGEPDYLNGARNANTLLEKEFKKFTTKLHTHSPQSMRTDILFEMEKKYPEEFNRTLHNKFRSLDDIAVTGYLYHHYALLSGRALQSSDKTELVQQNHDFKKKLNNVVTLTKERNFDKLPLSVCINDGADSHLNEEWNVQVIKFLETLFPLPSSFEK</sequence>
<keyword id="KW-0270">Exopolysaccharide synthesis</keyword>
<keyword id="KW-0808">Transferase</keyword>